<keyword id="KW-0028">Amino-acid biosynthesis</keyword>
<keyword id="KW-0368">Histidine biosynthesis</keyword>
<keyword id="KW-0479">Metal-binding</keyword>
<keyword id="KW-0520">NAD</keyword>
<keyword id="KW-0560">Oxidoreductase</keyword>
<keyword id="KW-1185">Reference proteome</keyword>
<keyword id="KW-0862">Zinc</keyword>
<comment type="function">
    <text evidence="1">Catalyzes the sequential NAD-dependent oxidations of L-histidinol to L-histidinaldehyde and then to L-histidine.</text>
</comment>
<comment type="catalytic activity">
    <reaction>
        <text>L-histidinol + 2 NAD(+) + H2O = L-histidine + 2 NADH + 3 H(+)</text>
        <dbReference type="Rhea" id="RHEA:20641"/>
        <dbReference type="ChEBI" id="CHEBI:15377"/>
        <dbReference type="ChEBI" id="CHEBI:15378"/>
        <dbReference type="ChEBI" id="CHEBI:57540"/>
        <dbReference type="ChEBI" id="CHEBI:57595"/>
        <dbReference type="ChEBI" id="CHEBI:57699"/>
        <dbReference type="ChEBI" id="CHEBI:57945"/>
        <dbReference type="EC" id="1.1.1.23"/>
    </reaction>
</comment>
<comment type="cofactor">
    <cofactor evidence="1">
        <name>Zn(2+)</name>
        <dbReference type="ChEBI" id="CHEBI:29105"/>
    </cofactor>
    <text evidence="1">Binds 1 zinc ion per subunit.</text>
</comment>
<comment type="pathway">
    <text>Amino-acid biosynthesis; L-histidine biosynthesis; L-histidine from 5-phospho-alpha-D-ribose 1-diphosphate: step 9/9.</text>
</comment>
<comment type="similarity">
    <text evidence="2">Belongs to the histidinol dehydrogenase family.</text>
</comment>
<comment type="sequence caution" evidence="2">
    <conflict type="frameshift">
        <sequence resource="EMBL-CDS" id="AAF18281"/>
    </conflict>
</comment>
<feature type="chain" id="PRO_0000135889" description="Histidinol dehydrogenase">
    <location>
        <begin position="1"/>
        <end position="430"/>
    </location>
</feature>
<feature type="active site" description="Proton acceptor" evidence="1">
    <location>
        <position position="327"/>
    </location>
</feature>
<feature type="active site" description="Proton acceptor" evidence="1">
    <location>
        <position position="328"/>
    </location>
</feature>
<feature type="binding site" evidence="1">
    <location>
        <position position="130"/>
    </location>
    <ligand>
        <name>NAD(+)</name>
        <dbReference type="ChEBI" id="CHEBI:57540"/>
    </ligand>
</feature>
<feature type="binding site" evidence="1">
    <location>
        <position position="191"/>
    </location>
    <ligand>
        <name>NAD(+)</name>
        <dbReference type="ChEBI" id="CHEBI:57540"/>
    </ligand>
</feature>
<feature type="binding site" evidence="1">
    <location>
        <position position="214"/>
    </location>
    <ligand>
        <name>NAD(+)</name>
        <dbReference type="ChEBI" id="CHEBI:57540"/>
    </ligand>
</feature>
<feature type="binding site" evidence="1">
    <location>
        <position position="237"/>
    </location>
    <ligand>
        <name>substrate</name>
    </ligand>
</feature>
<feature type="binding site" evidence="1">
    <location>
        <position position="259"/>
    </location>
    <ligand>
        <name>substrate</name>
    </ligand>
</feature>
<feature type="binding site" evidence="1">
    <location>
        <position position="259"/>
    </location>
    <ligand>
        <name>Zn(2+)</name>
        <dbReference type="ChEBI" id="CHEBI:29105"/>
    </ligand>
</feature>
<feature type="binding site" evidence="1">
    <location>
        <position position="262"/>
    </location>
    <ligand>
        <name>substrate</name>
    </ligand>
</feature>
<feature type="binding site" evidence="1">
    <location>
        <position position="262"/>
    </location>
    <ligand>
        <name>Zn(2+)</name>
        <dbReference type="ChEBI" id="CHEBI:29105"/>
    </ligand>
</feature>
<feature type="binding site" evidence="1">
    <location>
        <position position="328"/>
    </location>
    <ligand>
        <name>substrate</name>
    </ligand>
</feature>
<feature type="binding site" evidence="1">
    <location>
        <position position="361"/>
    </location>
    <ligand>
        <name>substrate</name>
    </ligand>
</feature>
<feature type="binding site" evidence="1">
    <location>
        <position position="361"/>
    </location>
    <ligand>
        <name>Zn(2+)</name>
        <dbReference type="ChEBI" id="CHEBI:29105"/>
    </ligand>
</feature>
<feature type="binding site" evidence="1">
    <location>
        <position position="415"/>
    </location>
    <ligand>
        <name>substrate</name>
    </ligand>
</feature>
<feature type="binding site" evidence="1">
    <location>
        <position position="420"/>
    </location>
    <ligand>
        <name>substrate</name>
    </ligand>
</feature>
<feature type="binding site" evidence="1">
    <location>
        <position position="420"/>
    </location>
    <ligand>
        <name>Zn(2+)</name>
        <dbReference type="ChEBI" id="CHEBI:29105"/>
    </ligand>
</feature>
<feature type="sequence conflict" description="In Ref. 1; AAF18281." evidence="2" ref="1">
    <original>PAAVTLAKAEGLPAHAESVISRLNK</original>
    <variation>LRL</variation>
    <location>
        <begin position="406"/>
        <end position="430"/>
    </location>
</feature>
<gene>
    <name type="primary">hisD</name>
    <name type="synonym">hdh</name>
    <name type="ordered locus">ZMO1551</name>
</gene>
<protein>
    <recommendedName>
        <fullName>Histidinol dehydrogenase</fullName>
        <shortName>HDH</shortName>
        <ecNumber>1.1.1.23</ecNumber>
    </recommendedName>
</protein>
<organism>
    <name type="scientific">Zymomonas mobilis subsp. mobilis (strain ATCC 31821 / ZM4 / CP4)</name>
    <dbReference type="NCBI Taxonomy" id="264203"/>
    <lineage>
        <taxon>Bacteria</taxon>
        <taxon>Pseudomonadati</taxon>
        <taxon>Pseudomonadota</taxon>
        <taxon>Alphaproteobacteria</taxon>
        <taxon>Sphingomonadales</taxon>
        <taxon>Zymomonadaceae</taxon>
        <taxon>Zymomonas</taxon>
    </lineage>
</organism>
<reference key="1">
    <citation type="submission" date="1998-08" db="EMBL/GenBank/DDBJ databases">
        <authorList>
            <person name="Kang H.L."/>
            <person name="Kang H.S."/>
        </authorList>
    </citation>
    <scope>NUCLEOTIDE SEQUENCE [GENOMIC DNA]</scope>
    <source>
        <strain>ATCC 31821 / ZM4 / CP4</strain>
    </source>
</reference>
<reference key="2">
    <citation type="journal article" date="2005" name="Nat. Biotechnol.">
        <title>The genome sequence of the ethanologenic bacterium Zymomonas mobilis ZM4.</title>
        <authorList>
            <person name="Seo J.-S."/>
            <person name="Chong H."/>
            <person name="Park H.S."/>
            <person name="Yoon K.-O."/>
            <person name="Jung C."/>
            <person name="Kim J.J."/>
            <person name="Hong J.H."/>
            <person name="Kim H."/>
            <person name="Kim J.-H."/>
            <person name="Kil J.-I."/>
            <person name="Park C.J."/>
            <person name="Oh H.-M."/>
            <person name="Lee J.-S."/>
            <person name="Jin S.-J."/>
            <person name="Um H.-W."/>
            <person name="Lee H.-J."/>
            <person name="Oh S.-J."/>
            <person name="Kim J.Y."/>
            <person name="Kang H.L."/>
            <person name="Lee S.Y."/>
            <person name="Lee K.J."/>
            <person name="Kang H.S."/>
        </authorList>
    </citation>
    <scope>NUCLEOTIDE SEQUENCE [LARGE SCALE GENOMIC DNA]</scope>
    <source>
        <strain>ATCC 31821 / ZM4 / CP4</strain>
    </source>
</reference>
<reference key="3">
    <citation type="journal article" date="2009" name="Nat. Biotechnol.">
        <title>Improved genome annotation for Zymomonas mobilis.</title>
        <authorList>
            <person name="Yang S."/>
            <person name="Pappas K.M."/>
            <person name="Hauser L.J."/>
            <person name="Land M.L."/>
            <person name="Chen G.L."/>
            <person name="Hurst G.B."/>
            <person name="Pan C."/>
            <person name="Kouvelis V.N."/>
            <person name="Typas M.A."/>
            <person name="Pelletier D.A."/>
            <person name="Klingeman D.M."/>
            <person name="Chang Y.J."/>
            <person name="Samatova N.F."/>
            <person name="Brown S.D."/>
        </authorList>
    </citation>
    <scope>SEQUENCE REVISION</scope>
</reference>
<sequence>MLLKLDSRKADFQADFTRLVDERRESEGDVSRDVSAIIADVKKRGDVAIAELTQKFDRHDLNKGGWQLTQEEIKKACDSLPSELMDALKLAATRIRYCHENQLPESSEMTDAAGVRMGVRWQAVEAAGLYVPGGRAAYCSSVLMNAVPAKVAGVKRLVMVTPTPDGFVNPAVIAAAVISEVDEIWKIGGAQAVAALALGTEKIKPVDVVVGPGNAWVAEAKRQLYGQVGIDMVAGPSEIVVVADKDNDPEWLAADLLSQAEHDPTSQSILISDSEDLIEKTIEAVGRRLEKLETQKVARESWDKHGATILVQSLDEAPALVDRLAPEHLELAVADPDALFANVHHSGSVFLGRYTPEAIGDYVGGPNHVLPTGRRARFSSGLSVIDFMKRTTYLNCSQEALSKIGPAAVTLAKAEGLPAHAESVISRLNK</sequence>
<accession>Q9RH05</accession>
<accession>Q5NM85</accession>
<proteinExistence type="inferred from homology"/>
<name>HISX_ZYMMO</name>
<dbReference type="EC" id="1.1.1.23"/>
<dbReference type="EMBL" id="AF088897">
    <property type="protein sequence ID" value="AAF18281.1"/>
    <property type="status" value="ALT_FRAME"/>
    <property type="molecule type" value="Genomic_DNA"/>
</dbReference>
<dbReference type="EMBL" id="AE008692">
    <property type="protein sequence ID" value="AAV90175.2"/>
    <property type="molecule type" value="Genomic_DNA"/>
</dbReference>
<dbReference type="RefSeq" id="WP_011241316.1">
    <property type="nucleotide sequence ID" value="NZ_CP035711.1"/>
</dbReference>
<dbReference type="SMR" id="Q9RH05"/>
<dbReference type="STRING" id="264203.ZMO1551"/>
<dbReference type="GeneID" id="79905112"/>
<dbReference type="KEGG" id="zmo:ZMO1551"/>
<dbReference type="eggNOG" id="COG0141">
    <property type="taxonomic scope" value="Bacteria"/>
</dbReference>
<dbReference type="HOGENOM" id="CLU_006732_3_3_5"/>
<dbReference type="UniPathway" id="UPA00031">
    <property type="reaction ID" value="UER00014"/>
</dbReference>
<dbReference type="Proteomes" id="UP000001173">
    <property type="component" value="Chromosome"/>
</dbReference>
<dbReference type="GO" id="GO:0005829">
    <property type="term" value="C:cytosol"/>
    <property type="evidence" value="ECO:0007669"/>
    <property type="project" value="TreeGrafter"/>
</dbReference>
<dbReference type="GO" id="GO:0004399">
    <property type="term" value="F:histidinol dehydrogenase activity"/>
    <property type="evidence" value="ECO:0007669"/>
    <property type="project" value="UniProtKB-UniRule"/>
</dbReference>
<dbReference type="GO" id="GO:0051287">
    <property type="term" value="F:NAD binding"/>
    <property type="evidence" value="ECO:0007669"/>
    <property type="project" value="InterPro"/>
</dbReference>
<dbReference type="GO" id="GO:0008270">
    <property type="term" value="F:zinc ion binding"/>
    <property type="evidence" value="ECO:0007669"/>
    <property type="project" value="UniProtKB-UniRule"/>
</dbReference>
<dbReference type="GO" id="GO:0000105">
    <property type="term" value="P:L-histidine biosynthetic process"/>
    <property type="evidence" value="ECO:0007669"/>
    <property type="project" value="UniProtKB-UniRule"/>
</dbReference>
<dbReference type="CDD" id="cd06572">
    <property type="entry name" value="Histidinol_dh"/>
    <property type="match status" value="1"/>
</dbReference>
<dbReference type="FunFam" id="3.40.50.1980:FF:000001">
    <property type="entry name" value="Histidinol dehydrogenase"/>
    <property type="match status" value="1"/>
</dbReference>
<dbReference type="FunFam" id="3.40.50.1980:FF:000026">
    <property type="entry name" value="Histidinol dehydrogenase"/>
    <property type="match status" value="1"/>
</dbReference>
<dbReference type="FunFam" id="1.20.5.1300:FF:000002">
    <property type="entry name" value="Histidinol dehydrogenase, chloroplastic"/>
    <property type="match status" value="1"/>
</dbReference>
<dbReference type="Gene3D" id="1.20.5.1300">
    <property type="match status" value="1"/>
</dbReference>
<dbReference type="Gene3D" id="3.40.50.1980">
    <property type="entry name" value="Nitrogenase molybdenum iron protein domain"/>
    <property type="match status" value="2"/>
</dbReference>
<dbReference type="HAMAP" id="MF_01024">
    <property type="entry name" value="HisD"/>
    <property type="match status" value="1"/>
</dbReference>
<dbReference type="InterPro" id="IPR016161">
    <property type="entry name" value="Ald_DH/histidinol_DH"/>
</dbReference>
<dbReference type="InterPro" id="IPR001692">
    <property type="entry name" value="Histidinol_DH_CS"/>
</dbReference>
<dbReference type="InterPro" id="IPR022695">
    <property type="entry name" value="Histidinol_DH_monofunct"/>
</dbReference>
<dbReference type="InterPro" id="IPR012131">
    <property type="entry name" value="Hstdl_DH"/>
</dbReference>
<dbReference type="NCBIfam" id="TIGR00069">
    <property type="entry name" value="hisD"/>
    <property type="match status" value="1"/>
</dbReference>
<dbReference type="PANTHER" id="PTHR21256:SF2">
    <property type="entry name" value="HISTIDINE BIOSYNTHESIS TRIFUNCTIONAL PROTEIN"/>
    <property type="match status" value="1"/>
</dbReference>
<dbReference type="PANTHER" id="PTHR21256">
    <property type="entry name" value="HISTIDINOL DEHYDROGENASE HDH"/>
    <property type="match status" value="1"/>
</dbReference>
<dbReference type="Pfam" id="PF00815">
    <property type="entry name" value="Histidinol_dh"/>
    <property type="match status" value="1"/>
</dbReference>
<dbReference type="PIRSF" id="PIRSF000099">
    <property type="entry name" value="Histidinol_dh"/>
    <property type="match status" value="1"/>
</dbReference>
<dbReference type="PRINTS" id="PR00083">
    <property type="entry name" value="HOLDHDRGNASE"/>
</dbReference>
<dbReference type="SUPFAM" id="SSF53720">
    <property type="entry name" value="ALDH-like"/>
    <property type="match status" value="1"/>
</dbReference>
<dbReference type="PROSITE" id="PS00611">
    <property type="entry name" value="HISOL_DEHYDROGENASE"/>
    <property type="match status" value="1"/>
</dbReference>
<evidence type="ECO:0000250" key="1"/>
<evidence type="ECO:0000305" key="2"/>